<protein>
    <recommendedName>
        <fullName evidence="1">N-succinylarginine dihydrolase</fullName>
        <ecNumber evidence="1">3.5.3.23</ecNumber>
    </recommendedName>
</protein>
<keyword id="KW-0056">Arginine metabolism</keyword>
<keyword id="KW-0378">Hydrolase</keyword>
<sequence>MNAHEVNFDGLVGPTHNYGGLSYGNVASQSNSQAVSNPKEAAKQGLAKMKALMEMGFKQGVLAPQARPDTAALRSLGFSGSDEEVIRRAAKEAMPLLAACSSASSMWTANAATVSPSADTADGRVHFTAANLNCKFHRSIEHPTTSRVLAAMFNDERHFAHHAALPAVSQFGDEGAANHTRFCKDYGDAGVEFFVFGRSAFDSRFPAPQRYPARQTLEACQAVARLHGLSEAGVVYAQQNPAVIDQGVFHNDVISVGNGEVLFHHEDAFLDTEKVLAELHDKLGRRGGRFRAICVPRDQVAVEDAVKSYLFNSQLLSKADGSMLLVVPEECRNNPRVWNYLDQLTGDDGPIREVKVFDLKQSMQNGGGPACLRLRVALQERELAAVNPGVIMSAGLYDTLVAWVDRHYRDRLSETDLADPQLLLECRTALDELTQILKLGSVYSFQLD</sequence>
<reference key="1">
    <citation type="journal article" date="2009" name="Genome Res.">
        <title>Newly introduced genomic prophage islands are critical determinants of in vivo competitiveness in the Liverpool epidemic strain of Pseudomonas aeruginosa.</title>
        <authorList>
            <person name="Winstanley C."/>
            <person name="Langille M.G.I."/>
            <person name="Fothergill J.L."/>
            <person name="Kukavica-Ibrulj I."/>
            <person name="Paradis-Bleau C."/>
            <person name="Sanschagrin F."/>
            <person name="Thomson N.R."/>
            <person name="Winsor G.L."/>
            <person name="Quail M.A."/>
            <person name="Lennard N."/>
            <person name="Bignell A."/>
            <person name="Clarke L."/>
            <person name="Seeger K."/>
            <person name="Saunders D."/>
            <person name="Harris D."/>
            <person name="Parkhill J."/>
            <person name="Hancock R.E.W."/>
            <person name="Brinkman F.S.L."/>
            <person name="Levesque R.C."/>
        </authorList>
    </citation>
    <scope>NUCLEOTIDE SEQUENCE [LARGE SCALE GENOMIC DNA]</scope>
    <source>
        <strain>LESB58</strain>
    </source>
</reference>
<feature type="chain" id="PRO_1000138019" description="N-succinylarginine dihydrolase">
    <location>
        <begin position="1"/>
        <end position="448"/>
    </location>
</feature>
<feature type="active site" evidence="1">
    <location>
        <position position="174"/>
    </location>
</feature>
<feature type="active site" evidence="1">
    <location>
        <position position="250"/>
    </location>
</feature>
<feature type="active site" description="Nucleophile" evidence="1">
    <location>
        <position position="371"/>
    </location>
</feature>
<feature type="binding site" evidence="1">
    <location>
        <begin position="19"/>
        <end position="28"/>
    </location>
    <ligand>
        <name>substrate</name>
    </ligand>
</feature>
<feature type="binding site" evidence="1">
    <location>
        <position position="110"/>
    </location>
    <ligand>
        <name>substrate</name>
    </ligand>
</feature>
<feature type="binding site" evidence="1">
    <location>
        <begin position="137"/>
        <end position="138"/>
    </location>
    <ligand>
        <name>substrate</name>
    </ligand>
</feature>
<feature type="binding site" evidence="1">
    <location>
        <position position="214"/>
    </location>
    <ligand>
        <name>substrate</name>
    </ligand>
</feature>
<feature type="binding site" evidence="1">
    <location>
        <position position="252"/>
    </location>
    <ligand>
        <name>substrate</name>
    </ligand>
</feature>
<feature type="binding site" evidence="1">
    <location>
        <position position="365"/>
    </location>
    <ligand>
        <name>substrate</name>
    </ligand>
</feature>
<dbReference type="EC" id="3.5.3.23" evidence="1"/>
<dbReference type="EMBL" id="FM209186">
    <property type="protein sequence ID" value="CAW29172.1"/>
    <property type="molecule type" value="Genomic_DNA"/>
</dbReference>
<dbReference type="RefSeq" id="WP_003085956.1">
    <property type="nucleotide sequence ID" value="NC_011770.1"/>
</dbReference>
<dbReference type="SMR" id="B7UY35"/>
<dbReference type="KEGG" id="pag:PLES_44171"/>
<dbReference type="HOGENOM" id="CLU_053835_0_0_6"/>
<dbReference type="UniPathway" id="UPA00185">
    <property type="reaction ID" value="UER00280"/>
</dbReference>
<dbReference type="GO" id="GO:0009015">
    <property type="term" value="F:N-succinylarginine dihydrolase activity"/>
    <property type="evidence" value="ECO:0007669"/>
    <property type="project" value="UniProtKB-UniRule"/>
</dbReference>
<dbReference type="GO" id="GO:0019544">
    <property type="term" value="P:arginine catabolic process to glutamate"/>
    <property type="evidence" value="ECO:0007669"/>
    <property type="project" value="UniProtKB-UniRule"/>
</dbReference>
<dbReference type="GO" id="GO:0019545">
    <property type="term" value="P:arginine catabolic process to succinate"/>
    <property type="evidence" value="ECO:0007669"/>
    <property type="project" value="UniProtKB-UniRule"/>
</dbReference>
<dbReference type="FunFam" id="3.75.10.20:FF:000001">
    <property type="entry name" value="N-succinylarginine dihydrolase"/>
    <property type="match status" value="1"/>
</dbReference>
<dbReference type="Gene3D" id="3.75.10.20">
    <property type="entry name" value="Succinylarginine dihydrolase"/>
    <property type="match status" value="1"/>
</dbReference>
<dbReference type="HAMAP" id="MF_01172">
    <property type="entry name" value="AstB"/>
    <property type="match status" value="1"/>
</dbReference>
<dbReference type="InterPro" id="IPR037031">
    <property type="entry name" value="AstB_sf"/>
</dbReference>
<dbReference type="InterPro" id="IPR007079">
    <property type="entry name" value="SuccinylArg_d-Hdrlase_AstB"/>
</dbReference>
<dbReference type="NCBIfam" id="TIGR03241">
    <property type="entry name" value="arg_catab_astB"/>
    <property type="match status" value="1"/>
</dbReference>
<dbReference type="NCBIfam" id="NF009789">
    <property type="entry name" value="PRK13281.1"/>
    <property type="match status" value="1"/>
</dbReference>
<dbReference type="PANTHER" id="PTHR30420">
    <property type="entry name" value="N-SUCCINYLARGININE DIHYDROLASE"/>
    <property type="match status" value="1"/>
</dbReference>
<dbReference type="PANTHER" id="PTHR30420:SF2">
    <property type="entry name" value="N-SUCCINYLARGININE DIHYDROLASE"/>
    <property type="match status" value="1"/>
</dbReference>
<dbReference type="Pfam" id="PF04996">
    <property type="entry name" value="AstB"/>
    <property type="match status" value="1"/>
</dbReference>
<dbReference type="SUPFAM" id="SSF55909">
    <property type="entry name" value="Pentein"/>
    <property type="match status" value="1"/>
</dbReference>
<accession>B7UY35</accession>
<comment type="function">
    <text evidence="1">Catalyzes the hydrolysis of N(2)-succinylarginine into N(2)-succinylornithine, ammonia and CO(2).</text>
</comment>
<comment type="catalytic activity">
    <reaction evidence="1">
        <text>N(2)-succinyl-L-arginine + 2 H2O + 2 H(+) = N(2)-succinyl-L-ornithine + 2 NH4(+) + CO2</text>
        <dbReference type="Rhea" id="RHEA:19533"/>
        <dbReference type="ChEBI" id="CHEBI:15377"/>
        <dbReference type="ChEBI" id="CHEBI:15378"/>
        <dbReference type="ChEBI" id="CHEBI:16526"/>
        <dbReference type="ChEBI" id="CHEBI:28938"/>
        <dbReference type="ChEBI" id="CHEBI:58241"/>
        <dbReference type="ChEBI" id="CHEBI:58514"/>
        <dbReference type="EC" id="3.5.3.23"/>
    </reaction>
</comment>
<comment type="pathway">
    <text evidence="1">Amino-acid degradation; L-arginine degradation via AST pathway; L-glutamate and succinate from L-arginine: step 2/5.</text>
</comment>
<comment type="subunit">
    <text evidence="1">Homodimer.</text>
</comment>
<comment type="similarity">
    <text evidence="1">Belongs to the succinylarginine dihydrolase family.</text>
</comment>
<proteinExistence type="inferred from homology"/>
<name>ASTB_PSEA8</name>
<organism>
    <name type="scientific">Pseudomonas aeruginosa (strain LESB58)</name>
    <dbReference type="NCBI Taxonomy" id="557722"/>
    <lineage>
        <taxon>Bacteria</taxon>
        <taxon>Pseudomonadati</taxon>
        <taxon>Pseudomonadota</taxon>
        <taxon>Gammaproteobacteria</taxon>
        <taxon>Pseudomonadales</taxon>
        <taxon>Pseudomonadaceae</taxon>
        <taxon>Pseudomonas</taxon>
    </lineage>
</organism>
<gene>
    <name evidence="1" type="primary">astB</name>
    <name type="ordered locus">PLES_44171</name>
</gene>
<evidence type="ECO:0000255" key="1">
    <source>
        <dbReference type="HAMAP-Rule" id="MF_01172"/>
    </source>
</evidence>